<comment type="function">
    <text evidence="1">Nuclear genome-encoded factor involved in ribosome biogenesis in chloroplasts. Binds specific group II introns in chloroplasts and facilitates their splicing. Required for normal development of chloroplasts.</text>
</comment>
<comment type="catalytic activity">
    <reaction evidence="8">
        <text>ATP + H2O = ADP + phosphate + H(+)</text>
        <dbReference type="Rhea" id="RHEA:13065"/>
        <dbReference type="ChEBI" id="CHEBI:15377"/>
        <dbReference type="ChEBI" id="CHEBI:15378"/>
        <dbReference type="ChEBI" id="CHEBI:30616"/>
        <dbReference type="ChEBI" id="CHEBI:43474"/>
        <dbReference type="ChEBI" id="CHEBI:456216"/>
        <dbReference type="EC" id="3.6.4.13"/>
    </reaction>
</comment>
<comment type="subcellular location">
    <subcellularLocation>
        <location evidence="2">Plastid</location>
        <location evidence="2">Chloroplast</location>
    </subcellularLocation>
</comment>
<comment type="domain">
    <text evidence="8">The Q motif is unique to and characteristic of the DEAD box family of RNA helicases and controls ATP binding and hydrolysis.</text>
</comment>
<comment type="similarity">
    <text evidence="8">Belongs to the DEAD box helicase family. DDX21/DDX50 subfamily.</text>
</comment>
<gene>
    <name evidence="8" type="primary">RH3A</name>
    <name evidence="9" type="ORF">ZEAMMB73_Zm00001d012922</name>
</gene>
<name>RH3A_MAIZE</name>
<sequence length="745" mass="80384">MASLVTLPAIAFSNPATASGAVRLRAAAFRCWALRRRGWAVAAAVASPNSVLSEHAFKRLQLGSDDEDEEGPYGSDADEGFQGDEEELAIARLGLPDELVATLEKRGITHLFPIQRAVLIPALGGRDLIARAKTGTGKTLAFGIPMIKQLMEQDDGRSTRRGRTPRVLVLAPTRELAKQVEKEIKESAPKLGTVCVYGGVSYNVQQNALSRGVDVVVGTPGRIIDLINGGSLQLGEVQYLVLDEADQMLAVGFEEDVETILQQLPADRQSMLFSATMPSWVKKLSRRYLNNPLTIDLVGDQDEKLAEGIKLHAIPLTATSKRTILSDLITVYAKGGKTIVFTRTKKDADEVSLALTTSIASEALHGDISQHQRERTLNGFRQGKFTVLVATDVAARGLDIPNVDLIIHYELPNDPETFVHRSGRTGRAGKAGTAILMFTSSQKRTVMSLERDVGCKFEFISPPSIEEVLESSAEHVIATLRGVHPESTQYFLGAAEKLTEELGPHALASALAHLSGFSQPPSSRSLISYEQGWVTLQLTREPGYGRGFFSPRSVTGFLSDVCSAAADEVGKIYITADENVQGAVFDLPEEIAKDLLTMEVPPGNTLTKISKLPALQDDSPATDSYGRFSNDRGSRNRRSRGGGASRGRGGWDTDSEDRYRRGGRSLRSDNDSWSDDDWSGGGRKSNRSSSSFGGRSSSYGSRGSPSPSFGVRSSSLGGRESSRSFSGACFNCGESGHRASDCPNK</sequence>
<reference key="1">
    <citation type="journal article" date="2009" name="Science">
        <title>The B73 maize genome: complexity, diversity, and dynamics.</title>
        <authorList>
            <person name="Schnable P.S."/>
            <person name="Ware D."/>
            <person name="Fulton R.S."/>
            <person name="Stein J.C."/>
            <person name="Wei F."/>
            <person name="Pasternak S."/>
            <person name="Liang C."/>
            <person name="Zhang J."/>
            <person name="Fulton L."/>
            <person name="Graves T.A."/>
            <person name="Minx P."/>
            <person name="Reily A.D."/>
            <person name="Courtney L."/>
            <person name="Kruchowski S.S."/>
            <person name="Tomlinson C."/>
            <person name="Strong C."/>
            <person name="Delehaunty K."/>
            <person name="Fronick C."/>
            <person name="Courtney B."/>
            <person name="Rock S.M."/>
            <person name="Belter E."/>
            <person name="Du F."/>
            <person name="Kim K."/>
            <person name="Abbott R.M."/>
            <person name="Cotton M."/>
            <person name="Levy A."/>
            <person name="Marchetto P."/>
            <person name="Ochoa K."/>
            <person name="Jackson S.M."/>
            <person name="Gillam B."/>
            <person name="Chen W."/>
            <person name="Yan L."/>
            <person name="Higginbotham J."/>
            <person name="Cardenas M."/>
            <person name="Waligorski J."/>
            <person name="Applebaum E."/>
            <person name="Phelps L."/>
            <person name="Falcone J."/>
            <person name="Kanchi K."/>
            <person name="Thane T."/>
            <person name="Scimone A."/>
            <person name="Thane N."/>
            <person name="Henke J."/>
            <person name="Wang T."/>
            <person name="Ruppert J."/>
            <person name="Shah N."/>
            <person name="Rotter K."/>
            <person name="Hodges J."/>
            <person name="Ingenthron E."/>
            <person name="Cordes M."/>
            <person name="Kohlberg S."/>
            <person name="Sgro J."/>
            <person name="Delgado B."/>
            <person name="Mead K."/>
            <person name="Chinwalla A."/>
            <person name="Leonard S."/>
            <person name="Crouse K."/>
            <person name="Collura K."/>
            <person name="Kudrna D."/>
            <person name="Currie J."/>
            <person name="He R."/>
            <person name="Angelova A."/>
            <person name="Rajasekar S."/>
            <person name="Mueller T."/>
            <person name="Lomeli R."/>
            <person name="Scara G."/>
            <person name="Ko A."/>
            <person name="Delaney K."/>
            <person name="Wissotski M."/>
            <person name="Lopez G."/>
            <person name="Campos D."/>
            <person name="Braidotti M."/>
            <person name="Ashley E."/>
            <person name="Golser W."/>
            <person name="Kim H."/>
            <person name="Lee S."/>
            <person name="Lin J."/>
            <person name="Dujmic Z."/>
            <person name="Kim W."/>
            <person name="Talag J."/>
            <person name="Zuccolo A."/>
            <person name="Fan C."/>
            <person name="Sebastian A."/>
            <person name="Kramer M."/>
            <person name="Spiegel L."/>
            <person name="Nascimento L."/>
            <person name="Zutavern T."/>
            <person name="Miller B."/>
            <person name="Ambroise C."/>
            <person name="Muller S."/>
            <person name="Spooner W."/>
            <person name="Narechania A."/>
            <person name="Ren L."/>
            <person name="Wei S."/>
            <person name="Kumari S."/>
            <person name="Faga B."/>
            <person name="Levy M.J."/>
            <person name="McMahan L."/>
            <person name="Van Buren P."/>
            <person name="Vaughn M.W."/>
            <person name="Ying K."/>
            <person name="Yeh C.-T."/>
            <person name="Emrich S.J."/>
            <person name="Jia Y."/>
            <person name="Kalyanaraman A."/>
            <person name="Hsia A.-P."/>
            <person name="Barbazuk W.B."/>
            <person name="Baucom R.S."/>
            <person name="Brutnell T.P."/>
            <person name="Carpita N.C."/>
            <person name="Chaparro C."/>
            <person name="Chia J.-M."/>
            <person name="Deragon J.-M."/>
            <person name="Estill J.C."/>
            <person name="Fu Y."/>
            <person name="Jeddeloh J.A."/>
            <person name="Han Y."/>
            <person name="Lee H."/>
            <person name="Li P."/>
            <person name="Lisch D.R."/>
            <person name="Liu S."/>
            <person name="Liu Z."/>
            <person name="Nagel D.H."/>
            <person name="McCann M.C."/>
            <person name="SanMiguel P."/>
            <person name="Myers A.M."/>
            <person name="Nettleton D."/>
            <person name="Nguyen J."/>
            <person name="Penning B.W."/>
            <person name="Ponnala L."/>
            <person name="Schneider K.L."/>
            <person name="Schwartz D.C."/>
            <person name="Sharma A."/>
            <person name="Soderlund C."/>
            <person name="Springer N.M."/>
            <person name="Sun Q."/>
            <person name="Wang H."/>
            <person name="Waterman M."/>
            <person name="Westerman R."/>
            <person name="Wolfgruber T.K."/>
            <person name="Yang L."/>
            <person name="Yu Y."/>
            <person name="Zhang L."/>
            <person name="Zhou S."/>
            <person name="Zhu Q."/>
            <person name="Bennetzen J.L."/>
            <person name="Dawe R.K."/>
            <person name="Jiang J."/>
            <person name="Jiang N."/>
            <person name="Presting G.G."/>
            <person name="Wessler S.R."/>
            <person name="Aluru S."/>
            <person name="Martienssen R.A."/>
            <person name="Clifton S.W."/>
            <person name="McCombie W.R."/>
            <person name="Wing R.A."/>
            <person name="Wilson R.K."/>
        </authorList>
    </citation>
    <scope>NUCLEOTIDE SEQUENCE [LARGE SCALE GENOMIC DNA]</scope>
    <source>
        <strain>cv. B73</strain>
    </source>
</reference>
<keyword id="KW-0067">ATP-binding</keyword>
<keyword id="KW-0150">Chloroplast</keyword>
<keyword id="KW-0347">Helicase</keyword>
<keyword id="KW-0378">Hydrolase</keyword>
<keyword id="KW-0479">Metal-binding</keyword>
<keyword id="KW-0547">Nucleotide-binding</keyword>
<keyword id="KW-0934">Plastid</keyword>
<keyword id="KW-1185">Reference proteome</keyword>
<keyword id="KW-0690">Ribosome biogenesis</keyword>
<keyword id="KW-0694">RNA-binding</keyword>
<keyword id="KW-0809">Transit peptide</keyword>
<keyword id="KW-0862">Zinc</keyword>
<keyword id="KW-0863">Zinc-finger</keyword>
<dbReference type="EC" id="3.6.4.13" evidence="8"/>
<dbReference type="EMBL" id="CM000781">
    <property type="protein sequence ID" value="AQK61830.1"/>
    <property type="molecule type" value="Genomic_DNA"/>
</dbReference>
<dbReference type="RefSeq" id="XP_008681151.1">
    <property type="nucleotide sequence ID" value="XM_008682929.1"/>
</dbReference>
<dbReference type="SMR" id="A0A1D6GDY8"/>
<dbReference type="FunCoup" id="A0A1D6GDY8">
    <property type="interactions" value="1161"/>
</dbReference>
<dbReference type="IntAct" id="A0A1D6GDY8">
    <property type="interactions" value="1"/>
</dbReference>
<dbReference type="STRING" id="4577.A0A1D6GDY8"/>
<dbReference type="PaxDb" id="4577-GRMZM2G415491_P01"/>
<dbReference type="EnsemblPlants" id="Zm00001eb211400_T001">
    <property type="protein sequence ID" value="Zm00001eb211400_P001"/>
    <property type="gene ID" value="Zm00001eb211400"/>
</dbReference>
<dbReference type="Gramene" id="Zm00001eb211400_T001">
    <property type="protein sequence ID" value="Zm00001eb211400_P001"/>
    <property type="gene ID" value="Zm00001eb211400"/>
</dbReference>
<dbReference type="eggNOG" id="KOG0331">
    <property type="taxonomic scope" value="Eukaryota"/>
</dbReference>
<dbReference type="InParanoid" id="A0A1D6GDY8"/>
<dbReference type="OrthoDB" id="4255at2759"/>
<dbReference type="BRENDA" id="3.6.4.13">
    <property type="organism ID" value="6752"/>
</dbReference>
<dbReference type="Proteomes" id="UP000007305">
    <property type="component" value="Chromosome 5"/>
</dbReference>
<dbReference type="ExpressionAtlas" id="A0A1D6GDY8">
    <property type="expression patterns" value="baseline and differential"/>
</dbReference>
<dbReference type="GO" id="GO:0009507">
    <property type="term" value="C:chloroplast"/>
    <property type="evidence" value="ECO:0007669"/>
    <property type="project" value="UniProtKB-SubCell"/>
</dbReference>
<dbReference type="GO" id="GO:0005737">
    <property type="term" value="C:cytoplasm"/>
    <property type="evidence" value="ECO:0000318"/>
    <property type="project" value="GO_Central"/>
</dbReference>
<dbReference type="GO" id="GO:0005524">
    <property type="term" value="F:ATP binding"/>
    <property type="evidence" value="ECO:0007669"/>
    <property type="project" value="UniProtKB-KW"/>
</dbReference>
<dbReference type="GO" id="GO:0016887">
    <property type="term" value="F:ATP hydrolysis activity"/>
    <property type="evidence" value="ECO:0007669"/>
    <property type="project" value="RHEA"/>
</dbReference>
<dbReference type="GO" id="GO:0003723">
    <property type="term" value="F:RNA binding"/>
    <property type="evidence" value="ECO:0007669"/>
    <property type="project" value="UniProtKB-KW"/>
</dbReference>
<dbReference type="GO" id="GO:0003724">
    <property type="term" value="F:RNA helicase activity"/>
    <property type="evidence" value="ECO:0007669"/>
    <property type="project" value="UniProtKB-EC"/>
</dbReference>
<dbReference type="GO" id="GO:0008270">
    <property type="term" value="F:zinc ion binding"/>
    <property type="evidence" value="ECO:0007669"/>
    <property type="project" value="UniProtKB-KW"/>
</dbReference>
<dbReference type="GO" id="GO:0009658">
    <property type="term" value="P:chloroplast organization"/>
    <property type="evidence" value="ECO:0000250"/>
    <property type="project" value="UniProtKB"/>
</dbReference>
<dbReference type="GO" id="GO:0000373">
    <property type="term" value="P:Group II intron splicing"/>
    <property type="evidence" value="ECO:0000250"/>
    <property type="project" value="UniProtKB"/>
</dbReference>
<dbReference type="GO" id="GO:0042254">
    <property type="term" value="P:ribosome biogenesis"/>
    <property type="evidence" value="ECO:0000250"/>
    <property type="project" value="UniProtKB"/>
</dbReference>
<dbReference type="CDD" id="cd00268">
    <property type="entry name" value="DEADc"/>
    <property type="match status" value="1"/>
</dbReference>
<dbReference type="CDD" id="cd12938">
    <property type="entry name" value="GUCT_Hera"/>
    <property type="match status" value="1"/>
</dbReference>
<dbReference type="CDD" id="cd18787">
    <property type="entry name" value="SF2_C_DEAD"/>
    <property type="match status" value="1"/>
</dbReference>
<dbReference type="FunFam" id="4.10.60.10:FF:000037">
    <property type="entry name" value="DEAD-box ATP-dependent RNA helicase 3, chloroplastic"/>
    <property type="match status" value="1"/>
</dbReference>
<dbReference type="FunFam" id="3.40.50.300:FF:001840">
    <property type="entry name" value="DEAD-box ATP-dependent RNA helicase 3B, chloroplastic"/>
    <property type="match status" value="1"/>
</dbReference>
<dbReference type="FunFam" id="3.40.50.300:FF:000911">
    <property type="entry name" value="Nucleolar RNA helicase II"/>
    <property type="match status" value="1"/>
</dbReference>
<dbReference type="Gene3D" id="3.40.50.300">
    <property type="entry name" value="P-loop containing nucleotide triphosphate hydrolases"/>
    <property type="match status" value="2"/>
</dbReference>
<dbReference type="Gene3D" id="4.10.60.10">
    <property type="entry name" value="Zinc finger, CCHC-type"/>
    <property type="match status" value="1"/>
</dbReference>
<dbReference type="InterPro" id="IPR011545">
    <property type="entry name" value="DEAD/DEAH_box_helicase_dom"/>
</dbReference>
<dbReference type="InterPro" id="IPR050079">
    <property type="entry name" value="DEAD_box_RNA_helicase"/>
</dbReference>
<dbReference type="InterPro" id="IPR012562">
    <property type="entry name" value="GUCT"/>
</dbReference>
<dbReference type="InterPro" id="IPR014001">
    <property type="entry name" value="Helicase_ATP-bd"/>
</dbReference>
<dbReference type="InterPro" id="IPR001650">
    <property type="entry name" value="Helicase_C-like"/>
</dbReference>
<dbReference type="InterPro" id="IPR027417">
    <property type="entry name" value="P-loop_NTPase"/>
</dbReference>
<dbReference type="InterPro" id="IPR014014">
    <property type="entry name" value="RNA_helicase_DEAD_Q_motif"/>
</dbReference>
<dbReference type="InterPro" id="IPR001878">
    <property type="entry name" value="Znf_CCHC"/>
</dbReference>
<dbReference type="InterPro" id="IPR036875">
    <property type="entry name" value="Znf_CCHC_sf"/>
</dbReference>
<dbReference type="PANTHER" id="PTHR47959:SF1">
    <property type="entry name" value="ATP-DEPENDENT RNA HELICASE DBPA"/>
    <property type="match status" value="1"/>
</dbReference>
<dbReference type="PANTHER" id="PTHR47959">
    <property type="entry name" value="ATP-DEPENDENT RNA HELICASE RHLE-RELATED"/>
    <property type="match status" value="1"/>
</dbReference>
<dbReference type="Pfam" id="PF00270">
    <property type="entry name" value="DEAD"/>
    <property type="match status" value="1"/>
</dbReference>
<dbReference type="Pfam" id="PF08152">
    <property type="entry name" value="GUCT"/>
    <property type="match status" value="1"/>
</dbReference>
<dbReference type="Pfam" id="PF00271">
    <property type="entry name" value="Helicase_C"/>
    <property type="match status" value="1"/>
</dbReference>
<dbReference type="Pfam" id="PF00098">
    <property type="entry name" value="zf-CCHC"/>
    <property type="match status" value="1"/>
</dbReference>
<dbReference type="SMART" id="SM00487">
    <property type="entry name" value="DEXDc"/>
    <property type="match status" value="1"/>
</dbReference>
<dbReference type="SMART" id="SM00490">
    <property type="entry name" value="HELICc"/>
    <property type="match status" value="1"/>
</dbReference>
<dbReference type="SMART" id="SM00343">
    <property type="entry name" value="ZnF_C2HC"/>
    <property type="match status" value="1"/>
</dbReference>
<dbReference type="SUPFAM" id="SSF52540">
    <property type="entry name" value="P-loop containing nucleoside triphosphate hydrolases"/>
    <property type="match status" value="1"/>
</dbReference>
<dbReference type="SUPFAM" id="SSF57756">
    <property type="entry name" value="Retrovirus zinc finger-like domains"/>
    <property type="match status" value="1"/>
</dbReference>
<dbReference type="PROSITE" id="PS51192">
    <property type="entry name" value="HELICASE_ATP_BIND_1"/>
    <property type="match status" value="1"/>
</dbReference>
<dbReference type="PROSITE" id="PS51194">
    <property type="entry name" value="HELICASE_CTER"/>
    <property type="match status" value="1"/>
</dbReference>
<dbReference type="PROSITE" id="PS51195">
    <property type="entry name" value="Q_MOTIF"/>
    <property type="match status" value="1"/>
</dbReference>
<dbReference type="PROSITE" id="PS50158">
    <property type="entry name" value="ZF_CCHC"/>
    <property type="match status" value="1"/>
</dbReference>
<evidence type="ECO:0000250" key="1">
    <source>
        <dbReference type="UniProtKB" id="A0A1D6LAB7"/>
    </source>
</evidence>
<evidence type="ECO:0000255" key="2"/>
<evidence type="ECO:0000255" key="3">
    <source>
        <dbReference type="PROSITE-ProRule" id="PRU00047"/>
    </source>
</evidence>
<evidence type="ECO:0000255" key="4">
    <source>
        <dbReference type="PROSITE-ProRule" id="PRU00541"/>
    </source>
</evidence>
<evidence type="ECO:0000255" key="5">
    <source>
        <dbReference type="PROSITE-ProRule" id="PRU00542"/>
    </source>
</evidence>
<evidence type="ECO:0000255" key="6">
    <source>
        <dbReference type="PROSITE-ProRule" id="PRU00552"/>
    </source>
</evidence>
<evidence type="ECO:0000256" key="7">
    <source>
        <dbReference type="SAM" id="MobiDB-lite"/>
    </source>
</evidence>
<evidence type="ECO:0000305" key="8"/>
<evidence type="ECO:0000312" key="9">
    <source>
        <dbReference type="EMBL" id="AQK61830.1"/>
    </source>
</evidence>
<proteinExistence type="inferred from homology"/>
<accession>A0A1D6GDY8</accession>
<feature type="transit peptide" description="Chloroplast" evidence="2">
    <location>
        <begin position="1"/>
        <end position="41"/>
    </location>
</feature>
<feature type="chain" id="PRO_0000441394" description="DEAD-box ATP-dependent RNA helicase 3A, chloroplastic">
    <location>
        <begin position="42"/>
        <end position="745"/>
    </location>
</feature>
<feature type="domain" description="Helicase ATP-binding" evidence="4">
    <location>
        <begin position="119"/>
        <end position="295"/>
    </location>
</feature>
<feature type="domain" description="Helicase C-terminal" evidence="5">
    <location>
        <begin position="324"/>
        <end position="469"/>
    </location>
</feature>
<feature type="zinc finger region" description="CCHC-type" evidence="3">
    <location>
        <begin position="727"/>
        <end position="744"/>
    </location>
</feature>
<feature type="region of interest" description="Disordered" evidence="7">
    <location>
        <begin position="606"/>
        <end position="724"/>
    </location>
</feature>
<feature type="short sequence motif" description="Q motif" evidence="6">
    <location>
        <begin position="88"/>
        <end position="116"/>
    </location>
</feature>
<feature type="short sequence motif" description="DEAD box" evidence="4">
    <location>
        <begin position="243"/>
        <end position="246"/>
    </location>
</feature>
<feature type="compositionally biased region" description="Gly residues" evidence="7">
    <location>
        <begin position="641"/>
        <end position="650"/>
    </location>
</feature>
<feature type="compositionally biased region" description="Basic and acidic residues" evidence="7">
    <location>
        <begin position="656"/>
        <end position="670"/>
    </location>
</feature>
<feature type="compositionally biased region" description="Low complexity" evidence="7">
    <location>
        <begin position="687"/>
        <end position="724"/>
    </location>
</feature>
<feature type="binding site" evidence="4">
    <location>
        <begin position="132"/>
        <end position="139"/>
    </location>
    <ligand>
        <name>ATP</name>
        <dbReference type="ChEBI" id="CHEBI:30616"/>
    </ligand>
</feature>
<protein>
    <recommendedName>
        <fullName evidence="8">DEAD-box ATP-dependent RNA helicase 3A, chloroplastic</fullName>
        <shortName evidence="8">ZmRH3A</shortName>
        <ecNumber evidence="8">3.6.4.13</ecNumber>
    </recommendedName>
</protein>
<organism>
    <name type="scientific">Zea mays</name>
    <name type="common">Maize</name>
    <dbReference type="NCBI Taxonomy" id="4577"/>
    <lineage>
        <taxon>Eukaryota</taxon>
        <taxon>Viridiplantae</taxon>
        <taxon>Streptophyta</taxon>
        <taxon>Embryophyta</taxon>
        <taxon>Tracheophyta</taxon>
        <taxon>Spermatophyta</taxon>
        <taxon>Magnoliopsida</taxon>
        <taxon>Liliopsida</taxon>
        <taxon>Poales</taxon>
        <taxon>Poaceae</taxon>
        <taxon>PACMAD clade</taxon>
        <taxon>Panicoideae</taxon>
        <taxon>Andropogonodae</taxon>
        <taxon>Andropogoneae</taxon>
        <taxon>Tripsacinae</taxon>
        <taxon>Zea</taxon>
    </lineage>
</organism>